<sequence>MQKSEALFTRAQKTIPGGVNSPVRAFKAVGGTPRFITKADGAYMWDADGKQYIDYIQSWGPMILGHNNAPIREAVIEASCSGLSFGAPTEAEVIMAELVSEMVPSMEMVRMVNSGTEATMSAIRLARGYTSRNKIVKFEGCYHGHADSLLVKAGSGALTLGVPSSPGVPANVAEHTLTVEFNNLDSVKEIFETHGDDIACIIVEPVAGNMNCIPPVEGFLEGLRAICDQYGSVLIFDEVMTGFRVSRGGAQERFNVKPDLTCLGKVIGGGMPVGCFGGRRDIITHIAPTGPVYQAGTLSGNPVAMAAGLAALTQIKQPGLYDSIFENTQALVDGFQDLADKHNISLTTNIAGSMFGIFFTDVEKVTNYKQAINCNTEQFNKFYHGMLEQGVYLAPASYEAGFVSKAHDAEVIEKTLAAADKVFSTL</sequence>
<organism>
    <name type="scientific">Alteromonas mediterranea (strain DSM 17117 / CIP 110805 / LMG 28347 / Deep ecotype)</name>
    <dbReference type="NCBI Taxonomy" id="1774373"/>
    <lineage>
        <taxon>Bacteria</taxon>
        <taxon>Pseudomonadati</taxon>
        <taxon>Pseudomonadota</taxon>
        <taxon>Gammaproteobacteria</taxon>
        <taxon>Alteromonadales</taxon>
        <taxon>Alteromonadaceae</taxon>
        <taxon>Alteromonas/Salinimonas group</taxon>
        <taxon>Alteromonas</taxon>
    </lineage>
</organism>
<name>GSA_ALTMD</name>
<reference key="1">
    <citation type="journal article" date="2008" name="ISME J.">
        <title>Comparative genomics of two ecotypes of the marine planktonic copiotroph Alteromonas macleodii suggests alternative lifestyles associated with different kinds of particulate organic matter.</title>
        <authorList>
            <person name="Ivars-Martinez E."/>
            <person name="Martin-Cuadrado A.-B."/>
            <person name="D'Auria G."/>
            <person name="Mira A."/>
            <person name="Ferriera S."/>
            <person name="Johnson J."/>
            <person name="Friedman R."/>
            <person name="Rodriguez-Valera F."/>
        </authorList>
    </citation>
    <scope>NUCLEOTIDE SEQUENCE [LARGE SCALE GENOMIC DNA]</scope>
    <source>
        <strain>DSM 17117 / CIP 110805 / LMG 28347 / Deep ecotype</strain>
    </source>
</reference>
<proteinExistence type="inferred from homology"/>
<feature type="chain" id="PRO_0000382249" description="Glutamate-1-semialdehyde 2,1-aminomutase">
    <location>
        <begin position="1"/>
        <end position="426"/>
    </location>
</feature>
<feature type="modified residue" description="N6-(pyridoxal phosphate)lysine" evidence="1">
    <location>
        <position position="265"/>
    </location>
</feature>
<gene>
    <name evidence="1" type="primary">hemL</name>
    <name type="ordered locus">MADE_1002445</name>
</gene>
<protein>
    <recommendedName>
        <fullName evidence="1">Glutamate-1-semialdehyde 2,1-aminomutase</fullName>
        <shortName evidence="1">GSA</shortName>
        <ecNumber evidence="1">5.4.3.8</ecNumber>
    </recommendedName>
    <alternativeName>
        <fullName evidence="1">Glutamate-1-semialdehyde aminotransferase</fullName>
        <shortName evidence="1">GSA-AT</shortName>
    </alternativeName>
</protein>
<dbReference type="EC" id="5.4.3.8" evidence="1"/>
<dbReference type="EMBL" id="CP001103">
    <property type="protein sequence ID" value="AEA96638.1"/>
    <property type="molecule type" value="Genomic_DNA"/>
</dbReference>
<dbReference type="RefSeq" id="WP_012516993.1">
    <property type="nucleotide sequence ID" value="NC_011138.3"/>
</dbReference>
<dbReference type="SMR" id="B4S0D0"/>
<dbReference type="KEGG" id="amc:MADE_1002445"/>
<dbReference type="HOGENOM" id="CLU_016922_1_5_6"/>
<dbReference type="UniPathway" id="UPA00251">
    <property type="reaction ID" value="UER00317"/>
</dbReference>
<dbReference type="Proteomes" id="UP000001870">
    <property type="component" value="Chromosome"/>
</dbReference>
<dbReference type="GO" id="GO:0005737">
    <property type="term" value="C:cytoplasm"/>
    <property type="evidence" value="ECO:0007669"/>
    <property type="project" value="UniProtKB-SubCell"/>
</dbReference>
<dbReference type="GO" id="GO:0042286">
    <property type="term" value="F:glutamate-1-semialdehyde 2,1-aminomutase activity"/>
    <property type="evidence" value="ECO:0007669"/>
    <property type="project" value="UniProtKB-UniRule"/>
</dbReference>
<dbReference type="GO" id="GO:0030170">
    <property type="term" value="F:pyridoxal phosphate binding"/>
    <property type="evidence" value="ECO:0007669"/>
    <property type="project" value="InterPro"/>
</dbReference>
<dbReference type="GO" id="GO:0008483">
    <property type="term" value="F:transaminase activity"/>
    <property type="evidence" value="ECO:0007669"/>
    <property type="project" value="InterPro"/>
</dbReference>
<dbReference type="GO" id="GO:0006782">
    <property type="term" value="P:protoporphyrinogen IX biosynthetic process"/>
    <property type="evidence" value="ECO:0007669"/>
    <property type="project" value="UniProtKB-UniRule"/>
</dbReference>
<dbReference type="CDD" id="cd00610">
    <property type="entry name" value="OAT_like"/>
    <property type="match status" value="1"/>
</dbReference>
<dbReference type="FunFam" id="3.40.640.10:FF:000021">
    <property type="entry name" value="Glutamate-1-semialdehyde 2,1-aminomutase"/>
    <property type="match status" value="1"/>
</dbReference>
<dbReference type="Gene3D" id="3.90.1150.10">
    <property type="entry name" value="Aspartate Aminotransferase, domain 1"/>
    <property type="match status" value="1"/>
</dbReference>
<dbReference type="Gene3D" id="3.40.640.10">
    <property type="entry name" value="Type I PLP-dependent aspartate aminotransferase-like (Major domain)"/>
    <property type="match status" value="1"/>
</dbReference>
<dbReference type="HAMAP" id="MF_00375">
    <property type="entry name" value="HemL_aminotrans_3"/>
    <property type="match status" value="1"/>
</dbReference>
<dbReference type="InterPro" id="IPR004639">
    <property type="entry name" value="4pyrrol_synth_GluAld_NH2Trfase"/>
</dbReference>
<dbReference type="InterPro" id="IPR005814">
    <property type="entry name" value="Aminotrans_3"/>
</dbReference>
<dbReference type="InterPro" id="IPR049704">
    <property type="entry name" value="Aminotrans_3_PPA_site"/>
</dbReference>
<dbReference type="InterPro" id="IPR015424">
    <property type="entry name" value="PyrdxlP-dep_Trfase"/>
</dbReference>
<dbReference type="InterPro" id="IPR015421">
    <property type="entry name" value="PyrdxlP-dep_Trfase_major"/>
</dbReference>
<dbReference type="InterPro" id="IPR015422">
    <property type="entry name" value="PyrdxlP-dep_Trfase_small"/>
</dbReference>
<dbReference type="NCBIfam" id="TIGR00713">
    <property type="entry name" value="hemL"/>
    <property type="match status" value="1"/>
</dbReference>
<dbReference type="NCBIfam" id="NF000818">
    <property type="entry name" value="PRK00062.1"/>
    <property type="match status" value="1"/>
</dbReference>
<dbReference type="PANTHER" id="PTHR43713">
    <property type="entry name" value="GLUTAMATE-1-SEMIALDEHYDE 2,1-AMINOMUTASE"/>
    <property type="match status" value="1"/>
</dbReference>
<dbReference type="PANTHER" id="PTHR43713:SF3">
    <property type="entry name" value="GLUTAMATE-1-SEMIALDEHYDE 2,1-AMINOMUTASE 1, CHLOROPLASTIC-RELATED"/>
    <property type="match status" value="1"/>
</dbReference>
<dbReference type="Pfam" id="PF00202">
    <property type="entry name" value="Aminotran_3"/>
    <property type="match status" value="1"/>
</dbReference>
<dbReference type="SUPFAM" id="SSF53383">
    <property type="entry name" value="PLP-dependent transferases"/>
    <property type="match status" value="1"/>
</dbReference>
<dbReference type="PROSITE" id="PS00600">
    <property type="entry name" value="AA_TRANSFER_CLASS_3"/>
    <property type="match status" value="1"/>
</dbReference>
<evidence type="ECO:0000255" key="1">
    <source>
        <dbReference type="HAMAP-Rule" id="MF_00375"/>
    </source>
</evidence>
<comment type="catalytic activity">
    <reaction evidence="1">
        <text>(S)-4-amino-5-oxopentanoate = 5-aminolevulinate</text>
        <dbReference type="Rhea" id="RHEA:14265"/>
        <dbReference type="ChEBI" id="CHEBI:57501"/>
        <dbReference type="ChEBI" id="CHEBI:356416"/>
        <dbReference type="EC" id="5.4.3.8"/>
    </reaction>
</comment>
<comment type="cofactor">
    <cofactor evidence="1">
        <name>pyridoxal 5'-phosphate</name>
        <dbReference type="ChEBI" id="CHEBI:597326"/>
    </cofactor>
</comment>
<comment type="pathway">
    <text evidence="1">Porphyrin-containing compound metabolism; protoporphyrin-IX biosynthesis; 5-aminolevulinate from L-glutamyl-tRNA(Glu): step 2/2.</text>
</comment>
<comment type="subunit">
    <text evidence="1">Homodimer.</text>
</comment>
<comment type="subcellular location">
    <subcellularLocation>
        <location evidence="1">Cytoplasm</location>
    </subcellularLocation>
</comment>
<comment type="similarity">
    <text evidence="1">Belongs to the class-III pyridoxal-phosphate-dependent aminotransferase family. HemL subfamily.</text>
</comment>
<keyword id="KW-0963">Cytoplasm</keyword>
<keyword id="KW-0413">Isomerase</keyword>
<keyword id="KW-0627">Porphyrin biosynthesis</keyword>
<keyword id="KW-0663">Pyridoxal phosphate</keyword>
<accession>B4S0D0</accession>
<accession>F2G6G8</accession>